<gene>
    <name type="primary">FSD1L</name>
    <name type="synonym">CCDC10</name>
    <name type="synonym">CSDUFD1</name>
    <name type="synonym">FSD1CL</name>
    <name type="synonym">FSD1NL</name>
</gene>
<reference key="1">
    <citation type="journal article" date="2001" name="Biochim. Biophys. Acta">
        <title>Characterization of human FSD1, a novel brain specific gene on chromosome 19 with paralogy to 9q31.</title>
        <authorList>
            <person name="Carim-Todd L."/>
            <person name="Escarceller M."/>
            <person name="Estivill X."/>
            <person name="Sumoy L."/>
        </authorList>
    </citation>
    <scope>NUCLEOTIDE SEQUENCE [MRNA] (ISOFORM 3)</scope>
</reference>
<reference key="2">
    <citation type="journal article" date="2004" name="Nat. Genet.">
        <title>Complete sequencing and characterization of 21,243 full-length human cDNAs.</title>
        <authorList>
            <person name="Ota T."/>
            <person name="Suzuki Y."/>
            <person name="Nishikawa T."/>
            <person name="Otsuki T."/>
            <person name="Sugiyama T."/>
            <person name="Irie R."/>
            <person name="Wakamatsu A."/>
            <person name="Hayashi K."/>
            <person name="Sato H."/>
            <person name="Nagai K."/>
            <person name="Kimura K."/>
            <person name="Makita H."/>
            <person name="Sekine M."/>
            <person name="Obayashi M."/>
            <person name="Nishi T."/>
            <person name="Shibahara T."/>
            <person name="Tanaka T."/>
            <person name="Ishii S."/>
            <person name="Yamamoto J."/>
            <person name="Saito K."/>
            <person name="Kawai Y."/>
            <person name="Isono Y."/>
            <person name="Nakamura Y."/>
            <person name="Nagahari K."/>
            <person name="Murakami K."/>
            <person name="Yasuda T."/>
            <person name="Iwayanagi T."/>
            <person name="Wagatsuma M."/>
            <person name="Shiratori A."/>
            <person name="Sudo H."/>
            <person name="Hosoiri T."/>
            <person name="Kaku Y."/>
            <person name="Kodaira H."/>
            <person name="Kondo H."/>
            <person name="Sugawara M."/>
            <person name="Takahashi M."/>
            <person name="Kanda K."/>
            <person name="Yokoi T."/>
            <person name="Furuya T."/>
            <person name="Kikkawa E."/>
            <person name="Omura Y."/>
            <person name="Abe K."/>
            <person name="Kamihara K."/>
            <person name="Katsuta N."/>
            <person name="Sato K."/>
            <person name="Tanikawa M."/>
            <person name="Yamazaki M."/>
            <person name="Ninomiya K."/>
            <person name="Ishibashi T."/>
            <person name="Yamashita H."/>
            <person name="Murakawa K."/>
            <person name="Fujimori K."/>
            <person name="Tanai H."/>
            <person name="Kimata M."/>
            <person name="Watanabe M."/>
            <person name="Hiraoka S."/>
            <person name="Chiba Y."/>
            <person name="Ishida S."/>
            <person name="Ono Y."/>
            <person name="Takiguchi S."/>
            <person name="Watanabe S."/>
            <person name="Yosida M."/>
            <person name="Hotuta T."/>
            <person name="Kusano J."/>
            <person name="Kanehori K."/>
            <person name="Takahashi-Fujii A."/>
            <person name="Hara H."/>
            <person name="Tanase T.-O."/>
            <person name="Nomura Y."/>
            <person name="Togiya S."/>
            <person name="Komai F."/>
            <person name="Hara R."/>
            <person name="Takeuchi K."/>
            <person name="Arita M."/>
            <person name="Imose N."/>
            <person name="Musashino K."/>
            <person name="Yuuki H."/>
            <person name="Oshima A."/>
            <person name="Sasaki N."/>
            <person name="Aotsuka S."/>
            <person name="Yoshikawa Y."/>
            <person name="Matsunawa H."/>
            <person name="Ichihara T."/>
            <person name="Shiohata N."/>
            <person name="Sano S."/>
            <person name="Moriya S."/>
            <person name="Momiyama H."/>
            <person name="Satoh N."/>
            <person name="Takami S."/>
            <person name="Terashima Y."/>
            <person name="Suzuki O."/>
            <person name="Nakagawa S."/>
            <person name="Senoh A."/>
            <person name="Mizoguchi H."/>
            <person name="Goto Y."/>
            <person name="Shimizu F."/>
            <person name="Wakebe H."/>
            <person name="Hishigaki H."/>
            <person name="Watanabe T."/>
            <person name="Sugiyama A."/>
            <person name="Takemoto M."/>
            <person name="Kawakami B."/>
            <person name="Yamazaki M."/>
            <person name="Watanabe K."/>
            <person name="Kumagai A."/>
            <person name="Itakura S."/>
            <person name="Fukuzumi Y."/>
            <person name="Fujimori Y."/>
            <person name="Komiyama M."/>
            <person name="Tashiro H."/>
            <person name="Tanigami A."/>
            <person name="Fujiwara T."/>
            <person name="Ono T."/>
            <person name="Yamada K."/>
            <person name="Fujii Y."/>
            <person name="Ozaki K."/>
            <person name="Hirao M."/>
            <person name="Ohmori Y."/>
            <person name="Kawabata A."/>
            <person name="Hikiji T."/>
            <person name="Kobatake N."/>
            <person name="Inagaki H."/>
            <person name="Ikema Y."/>
            <person name="Okamoto S."/>
            <person name="Okitani R."/>
            <person name="Kawakami T."/>
            <person name="Noguchi S."/>
            <person name="Itoh T."/>
            <person name="Shigeta K."/>
            <person name="Senba T."/>
            <person name="Matsumura K."/>
            <person name="Nakajima Y."/>
            <person name="Mizuno T."/>
            <person name="Morinaga M."/>
            <person name="Sasaki M."/>
            <person name="Togashi T."/>
            <person name="Oyama M."/>
            <person name="Hata H."/>
            <person name="Watanabe M."/>
            <person name="Komatsu T."/>
            <person name="Mizushima-Sugano J."/>
            <person name="Satoh T."/>
            <person name="Shirai Y."/>
            <person name="Takahashi Y."/>
            <person name="Nakagawa K."/>
            <person name="Okumura K."/>
            <person name="Nagase T."/>
            <person name="Nomura N."/>
            <person name="Kikuchi H."/>
            <person name="Masuho Y."/>
            <person name="Yamashita R."/>
            <person name="Nakai K."/>
            <person name="Yada T."/>
            <person name="Nakamura Y."/>
            <person name="Ohara O."/>
            <person name="Isogai T."/>
            <person name="Sugano S."/>
        </authorList>
    </citation>
    <scope>NUCLEOTIDE SEQUENCE [LARGE SCALE MRNA] (ISOFORMS 1 AND 2)</scope>
</reference>
<reference key="3">
    <citation type="journal article" date="2004" name="Nature">
        <title>DNA sequence and analysis of human chromosome 9.</title>
        <authorList>
            <person name="Humphray S.J."/>
            <person name="Oliver K."/>
            <person name="Hunt A.R."/>
            <person name="Plumb R.W."/>
            <person name="Loveland J.E."/>
            <person name="Howe K.L."/>
            <person name="Andrews T.D."/>
            <person name="Searle S."/>
            <person name="Hunt S.E."/>
            <person name="Scott C.E."/>
            <person name="Jones M.C."/>
            <person name="Ainscough R."/>
            <person name="Almeida J.P."/>
            <person name="Ambrose K.D."/>
            <person name="Ashwell R.I.S."/>
            <person name="Babbage A.K."/>
            <person name="Babbage S."/>
            <person name="Bagguley C.L."/>
            <person name="Bailey J."/>
            <person name="Banerjee R."/>
            <person name="Barker D.J."/>
            <person name="Barlow K.F."/>
            <person name="Bates K."/>
            <person name="Beasley H."/>
            <person name="Beasley O."/>
            <person name="Bird C.P."/>
            <person name="Bray-Allen S."/>
            <person name="Brown A.J."/>
            <person name="Brown J.Y."/>
            <person name="Burford D."/>
            <person name="Burrill W."/>
            <person name="Burton J."/>
            <person name="Carder C."/>
            <person name="Carter N.P."/>
            <person name="Chapman J.C."/>
            <person name="Chen Y."/>
            <person name="Clarke G."/>
            <person name="Clark S.Y."/>
            <person name="Clee C.M."/>
            <person name="Clegg S."/>
            <person name="Collier R.E."/>
            <person name="Corby N."/>
            <person name="Crosier M."/>
            <person name="Cummings A.T."/>
            <person name="Davies J."/>
            <person name="Dhami P."/>
            <person name="Dunn M."/>
            <person name="Dutta I."/>
            <person name="Dyer L.W."/>
            <person name="Earthrowl M.E."/>
            <person name="Faulkner L."/>
            <person name="Fleming C.J."/>
            <person name="Frankish A."/>
            <person name="Frankland J.A."/>
            <person name="French L."/>
            <person name="Fricker D.G."/>
            <person name="Garner P."/>
            <person name="Garnett J."/>
            <person name="Ghori J."/>
            <person name="Gilbert J.G.R."/>
            <person name="Glison C."/>
            <person name="Grafham D.V."/>
            <person name="Gribble S."/>
            <person name="Griffiths C."/>
            <person name="Griffiths-Jones S."/>
            <person name="Grocock R."/>
            <person name="Guy J."/>
            <person name="Hall R.E."/>
            <person name="Hammond S."/>
            <person name="Harley J.L."/>
            <person name="Harrison E.S.I."/>
            <person name="Hart E.A."/>
            <person name="Heath P.D."/>
            <person name="Henderson C.D."/>
            <person name="Hopkins B.L."/>
            <person name="Howard P.J."/>
            <person name="Howden P.J."/>
            <person name="Huckle E."/>
            <person name="Johnson C."/>
            <person name="Johnson D."/>
            <person name="Joy A.A."/>
            <person name="Kay M."/>
            <person name="Keenan S."/>
            <person name="Kershaw J.K."/>
            <person name="Kimberley A.M."/>
            <person name="King A."/>
            <person name="Knights A."/>
            <person name="Laird G.K."/>
            <person name="Langford C."/>
            <person name="Lawlor S."/>
            <person name="Leongamornlert D.A."/>
            <person name="Leversha M."/>
            <person name="Lloyd C."/>
            <person name="Lloyd D.M."/>
            <person name="Lovell J."/>
            <person name="Martin S."/>
            <person name="Mashreghi-Mohammadi M."/>
            <person name="Matthews L."/>
            <person name="McLaren S."/>
            <person name="McLay K.E."/>
            <person name="McMurray A."/>
            <person name="Milne S."/>
            <person name="Nickerson T."/>
            <person name="Nisbett J."/>
            <person name="Nordsiek G."/>
            <person name="Pearce A.V."/>
            <person name="Peck A.I."/>
            <person name="Porter K.M."/>
            <person name="Pandian R."/>
            <person name="Pelan S."/>
            <person name="Phillimore B."/>
            <person name="Povey S."/>
            <person name="Ramsey Y."/>
            <person name="Rand V."/>
            <person name="Scharfe M."/>
            <person name="Sehra H.K."/>
            <person name="Shownkeen R."/>
            <person name="Sims S.K."/>
            <person name="Skuce C.D."/>
            <person name="Smith M."/>
            <person name="Steward C.A."/>
            <person name="Swarbreck D."/>
            <person name="Sycamore N."/>
            <person name="Tester J."/>
            <person name="Thorpe A."/>
            <person name="Tracey A."/>
            <person name="Tromans A."/>
            <person name="Thomas D.W."/>
            <person name="Wall M."/>
            <person name="Wallis J.M."/>
            <person name="West A.P."/>
            <person name="Whitehead S.L."/>
            <person name="Willey D.L."/>
            <person name="Williams S.A."/>
            <person name="Wilming L."/>
            <person name="Wray P.W."/>
            <person name="Young L."/>
            <person name="Ashurst J.L."/>
            <person name="Coulson A."/>
            <person name="Blocker H."/>
            <person name="Durbin R.M."/>
            <person name="Sulston J.E."/>
            <person name="Hubbard T."/>
            <person name="Jackson M.J."/>
            <person name="Bentley D.R."/>
            <person name="Beck S."/>
            <person name="Rogers J."/>
            <person name="Dunham I."/>
        </authorList>
    </citation>
    <scope>NUCLEOTIDE SEQUENCE [LARGE SCALE GENOMIC DNA]</scope>
</reference>
<reference key="4">
    <citation type="journal article" date="2008" name="Proc. Natl. Acad. Sci. U.S.A.">
        <title>A quantitative atlas of mitotic phosphorylation.</title>
        <authorList>
            <person name="Dephoure N."/>
            <person name="Zhou C."/>
            <person name="Villen J."/>
            <person name="Beausoleil S.A."/>
            <person name="Bakalarski C.E."/>
            <person name="Elledge S.J."/>
            <person name="Gygi S.P."/>
        </authorList>
    </citation>
    <scope>PHOSPHORYLATION [LARGE SCALE ANALYSIS] AT SER-523</scope>
    <scope>IDENTIFICATION BY MASS SPECTROMETRY [LARGE SCALE ANALYSIS]</scope>
    <source>
        <tissue>Cervix carcinoma</tissue>
    </source>
</reference>
<reference key="5">
    <citation type="journal article" date="2010" name="Sci. Signal.">
        <title>Quantitative phosphoproteomics reveals widespread full phosphorylation site occupancy during mitosis.</title>
        <authorList>
            <person name="Olsen J.V."/>
            <person name="Vermeulen M."/>
            <person name="Santamaria A."/>
            <person name="Kumar C."/>
            <person name="Miller M.L."/>
            <person name="Jensen L.J."/>
            <person name="Gnad F."/>
            <person name="Cox J."/>
            <person name="Jensen T.S."/>
            <person name="Nigg E.A."/>
            <person name="Brunak S."/>
            <person name="Mann M."/>
        </authorList>
    </citation>
    <scope>PHOSPHORYLATION [LARGE SCALE ANALYSIS] AT SER-520</scope>
    <scope>IDENTIFICATION BY MASS SPECTROMETRY [LARGE SCALE ANALYSIS]</scope>
    <source>
        <tissue>Cervix carcinoma</tissue>
    </source>
</reference>
<reference key="6">
    <citation type="journal article" date="2012" name="Proc. Natl. Acad. Sci. U.S.A.">
        <title>N-terminal acetylome analyses and functional insights of the N-terminal acetyltransferase NatB.</title>
        <authorList>
            <person name="Van Damme P."/>
            <person name="Lasa M."/>
            <person name="Polevoda B."/>
            <person name="Gazquez C."/>
            <person name="Elosegui-Artola A."/>
            <person name="Kim D.S."/>
            <person name="De Juan-Pardo E."/>
            <person name="Demeyer K."/>
            <person name="Hole K."/>
            <person name="Larrea E."/>
            <person name="Timmerman E."/>
            <person name="Prieto J."/>
            <person name="Arnesen T."/>
            <person name="Sherman F."/>
            <person name="Gevaert K."/>
            <person name="Aldabe R."/>
        </authorList>
    </citation>
    <scope>ACETYLATION [LARGE SCALE ANALYSIS] AT MET-1 (ISOFORMS 2 AND 3)</scope>
    <scope>IDENTIFICATION BY MASS SPECTROMETRY [LARGE SCALE ANALYSIS]</scope>
</reference>
<organism>
    <name type="scientific">Homo sapiens</name>
    <name type="common">Human</name>
    <dbReference type="NCBI Taxonomy" id="9606"/>
    <lineage>
        <taxon>Eukaryota</taxon>
        <taxon>Metazoa</taxon>
        <taxon>Chordata</taxon>
        <taxon>Craniata</taxon>
        <taxon>Vertebrata</taxon>
        <taxon>Euteleostomi</taxon>
        <taxon>Mammalia</taxon>
        <taxon>Eutheria</taxon>
        <taxon>Euarchontoglires</taxon>
        <taxon>Primates</taxon>
        <taxon>Haplorrhini</taxon>
        <taxon>Catarrhini</taxon>
        <taxon>Hominidae</taxon>
        <taxon>Homo</taxon>
    </lineage>
</organism>
<sequence>MDSQKYCFKENENVTVDKACFLISNITIGPESINLQQEALQRIISTLANKNDEIQNFIDTLHHTLKGVQENSSNILSELDEEFDSLYSILDEVKESMINCIKQEQARKSQELQSQISQCNNALENSEELLEFATRSLDIKEPEEFSKAARQIKDRVTMASAFRLSLKPKVSDNMTHLMVDFSQERQMLQTLKFLPVPKAPEIDPVECLVADNSVTVAWRMPEEDNKIDHFILEHRKTNFDGLPRVKDERCWEIIDNIKGTEYTLSGLKFDSKYMNFRVRACNKAVAGEYSDPVTLETKALNFNLDNSSSHLNLKVEDTCVEWDPTGGKGQESKIKGKENKGRSGTPSPKRTSVGSRPPAVRGSRDRFTGESYTVLGDTAIESGQHYWEVKAQKDCKSYSVGVAYKTLGKFDQLGKTNTSWCIHVNNWLQNTFAAKHNNKVKALDVTVPEKIGVFCDFDGGQLSFYDANSKQLLYSFKTKFTQPVLPGFMVWCGGLSLSTGMQVPSAVRTLQKSENGMTGSASSLNNVVTQ</sequence>
<protein>
    <recommendedName>
        <fullName>FSD1-like protein</fullName>
    </recommendedName>
    <alternativeName>
        <fullName>Coiled-coil domain-containing protein 10</fullName>
    </alternativeName>
    <alternativeName>
        <fullName>FSD1 N-terminal-like protein</fullName>
    </alternativeName>
</protein>
<evidence type="ECO:0000255" key="1"/>
<evidence type="ECO:0000255" key="2">
    <source>
        <dbReference type="PROSITE-ProRule" id="PRU00316"/>
    </source>
</evidence>
<evidence type="ECO:0000255" key="3">
    <source>
        <dbReference type="PROSITE-ProRule" id="PRU00548"/>
    </source>
</evidence>
<evidence type="ECO:0000255" key="4">
    <source>
        <dbReference type="PROSITE-ProRule" id="PRU00586"/>
    </source>
</evidence>
<evidence type="ECO:0000256" key="5">
    <source>
        <dbReference type="SAM" id="MobiDB-lite"/>
    </source>
</evidence>
<evidence type="ECO:0000303" key="6">
    <source>
    </source>
</evidence>
<evidence type="ECO:0000303" key="7">
    <source>
    </source>
</evidence>
<evidence type="ECO:0000305" key="8"/>
<evidence type="ECO:0007744" key="9">
    <source>
    </source>
</evidence>
<evidence type="ECO:0007744" key="10">
    <source>
    </source>
</evidence>
<evidence type="ECO:0007744" key="11">
    <source>
    </source>
</evidence>
<dbReference type="EMBL" id="AF316830">
    <property type="protein sequence ID" value="AAK26748.1"/>
    <property type="molecule type" value="mRNA"/>
</dbReference>
<dbReference type="EMBL" id="AK299350">
    <property type="protein sequence ID" value="BAH13012.1"/>
    <property type="molecule type" value="mRNA"/>
</dbReference>
<dbReference type="EMBL" id="AK299491">
    <property type="protein sequence ID" value="BAH13049.1"/>
    <property type="molecule type" value="mRNA"/>
</dbReference>
<dbReference type="EMBL" id="AL158070">
    <property type="status" value="NOT_ANNOTATED_CDS"/>
    <property type="molecule type" value="Genomic_DNA"/>
</dbReference>
<dbReference type="EMBL" id="AL161627">
    <property type="status" value="NOT_ANNOTATED_CDS"/>
    <property type="molecule type" value="Genomic_DNA"/>
</dbReference>
<dbReference type="CCDS" id="CCDS47999.1">
    <molecule id="Q9BXM9-1"/>
</dbReference>
<dbReference type="CCDS" id="CCDS6764.1">
    <molecule id="Q9BXM9-3"/>
</dbReference>
<dbReference type="RefSeq" id="NP_001138785.1">
    <molecule id="Q9BXM9-1"/>
    <property type="nucleotide sequence ID" value="NM_001145313.3"/>
</dbReference>
<dbReference type="RefSeq" id="NP_001274120.1">
    <property type="nucleotide sequence ID" value="NM_001287191.1"/>
</dbReference>
<dbReference type="RefSeq" id="NP_001274121.1">
    <property type="nucleotide sequence ID" value="NM_001287192.1"/>
</dbReference>
<dbReference type="RefSeq" id="NP_114125.1">
    <molecule id="Q9BXM9-3"/>
    <property type="nucleotide sequence ID" value="NM_031919.5"/>
</dbReference>
<dbReference type="RefSeq" id="XP_016870672.1">
    <molecule id="Q9BXM9-2"/>
    <property type="nucleotide sequence ID" value="XM_017015183.2"/>
</dbReference>
<dbReference type="RefSeq" id="XP_054219913.1">
    <molecule id="Q9BXM9-2"/>
    <property type="nucleotide sequence ID" value="XM_054363938.1"/>
</dbReference>
<dbReference type="BioGRID" id="123772">
    <property type="interactions" value="6"/>
</dbReference>
<dbReference type="FunCoup" id="Q9BXM9">
    <property type="interactions" value="24"/>
</dbReference>
<dbReference type="IntAct" id="Q9BXM9">
    <property type="interactions" value="2"/>
</dbReference>
<dbReference type="STRING" id="9606.ENSP00000417492"/>
<dbReference type="iPTMnet" id="Q9BXM9"/>
<dbReference type="PhosphoSitePlus" id="Q9BXM9"/>
<dbReference type="BioMuta" id="FSD1L"/>
<dbReference type="DMDM" id="302393701"/>
<dbReference type="jPOST" id="Q9BXM9"/>
<dbReference type="MassIVE" id="Q9BXM9"/>
<dbReference type="PaxDb" id="9606-ENSP00000417492"/>
<dbReference type="PeptideAtlas" id="Q9BXM9"/>
<dbReference type="ProteomicsDB" id="79458">
    <molecule id="Q9BXM9-1"/>
</dbReference>
<dbReference type="ProteomicsDB" id="79459">
    <molecule id="Q9BXM9-2"/>
</dbReference>
<dbReference type="ProteomicsDB" id="79460">
    <molecule id="Q9BXM9-3"/>
</dbReference>
<dbReference type="Antibodypedia" id="29292">
    <property type="antibodies" value="83 antibodies from 22 providers"/>
</dbReference>
<dbReference type="DNASU" id="83856"/>
<dbReference type="Ensembl" id="ENST00000469022.5">
    <molecule id="Q9BXM9-3"/>
    <property type="protein sequence ID" value="ENSP00000487223.1"/>
    <property type="gene ID" value="ENSG00000106701.13"/>
</dbReference>
<dbReference type="Ensembl" id="ENST00000481272.6">
    <molecule id="Q9BXM9-1"/>
    <property type="protein sequence ID" value="ENSP00000417492.1"/>
    <property type="gene ID" value="ENSG00000106701.13"/>
</dbReference>
<dbReference type="GeneID" id="83856"/>
<dbReference type="KEGG" id="hsa:83856"/>
<dbReference type="MANE-Select" id="ENST00000481272.6">
    <property type="protein sequence ID" value="ENSP00000417492.1"/>
    <property type="RefSeq nucleotide sequence ID" value="NM_001145313.3"/>
    <property type="RefSeq protein sequence ID" value="NP_001138785.1"/>
</dbReference>
<dbReference type="UCSC" id="uc011lvv.3">
    <molecule id="Q9BXM9-1"/>
    <property type="organism name" value="human"/>
</dbReference>
<dbReference type="AGR" id="HGNC:13753"/>
<dbReference type="CTD" id="83856"/>
<dbReference type="DisGeNET" id="83856"/>
<dbReference type="GeneCards" id="FSD1L"/>
<dbReference type="HGNC" id="HGNC:13753">
    <property type="gene designation" value="FSD1L"/>
</dbReference>
<dbReference type="HPA" id="ENSG00000106701">
    <property type="expression patterns" value="Tissue enhanced (retina)"/>
</dbReference>
<dbReference type="MalaCards" id="FSD1L"/>
<dbReference type="MIM" id="609829">
    <property type="type" value="gene"/>
</dbReference>
<dbReference type="neXtProt" id="NX_Q9BXM9"/>
<dbReference type="OpenTargets" id="ENSG00000106701"/>
<dbReference type="PharmGKB" id="PA26931"/>
<dbReference type="VEuPathDB" id="HostDB:ENSG00000106701"/>
<dbReference type="eggNOG" id="KOG2177">
    <property type="taxonomic scope" value="Eukaryota"/>
</dbReference>
<dbReference type="GeneTree" id="ENSGT00940000157979"/>
<dbReference type="InParanoid" id="Q9BXM9"/>
<dbReference type="OMA" id="ERCWEMV"/>
<dbReference type="OrthoDB" id="9927450at2759"/>
<dbReference type="PAN-GO" id="Q9BXM9">
    <property type="GO annotations" value="0 GO annotations based on evolutionary models"/>
</dbReference>
<dbReference type="PhylomeDB" id="Q9BXM9"/>
<dbReference type="TreeFam" id="TF333654"/>
<dbReference type="PathwayCommons" id="Q9BXM9"/>
<dbReference type="SignaLink" id="Q9BXM9"/>
<dbReference type="BioGRID-ORCS" id="83856">
    <property type="hits" value="14 hits in 1145 CRISPR screens"/>
</dbReference>
<dbReference type="ChiTaRS" id="FSD1L">
    <property type="organism name" value="human"/>
</dbReference>
<dbReference type="GenomeRNAi" id="83856"/>
<dbReference type="Pharos" id="Q9BXM9">
    <property type="development level" value="Tdark"/>
</dbReference>
<dbReference type="PRO" id="PR:Q9BXM9"/>
<dbReference type="Proteomes" id="UP000005640">
    <property type="component" value="Chromosome 9"/>
</dbReference>
<dbReference type="RNAct" id="Q9BXM9">
    <property type="molecule type" value="protein"/>
</dbReference>
<dbReference type="Bgee" id="ENSG00000106701">
    <property type="expression patterns" value="Expressed in endothelial cell and 160 other cell types or tissues"/>
</dbReference>
<dbReference type="ExpressionAtlas" id="Q9BXM9">
    <property type="expression patterns" value="baseline and differential"/>
</dbReference>
<dbReference type="CDD" id="cd00063">
    <property type="entry name" value="FN3"/>
    <property type="match status" value="1"/>
</dbReference>
<dbReference type="CDD" id="cd12901">
    <property type="entry name" value="SPRY_PRY_FSD1"/>
    <property type="match status" value="1"/>
</dbReference>
<dbReference type="Gene3D" id="1.20.5.170">
    <property type="match status" value="1"/>
</dbReference>
<dbReference type="Gene3D" id="2.60.120.920">
    <property type="match status" value="1"/>
</dbReference>
<dbReference type="Gene3D" id="2.60.40.10">
    <property type="entry name" value="Immunoglobulins"/>
    <property type="match status" value="1"/>
</dbReference>
<dbReference type="InterPro" id="IPR001870">
    <property type="entry name" value="B30.2/SPRY"/>
</dbReference>
<dbReference type="InterPro" id="IPR043136">
    <property type="entry name" value="B30.2/SPRY_sf"/>
</dbReference>
<dbReference type="InterPro" id="IPR003649">
    <property type="entry name" value="Bbox_C"/>
</dbReference>
<dbReference type="InterPro" id="IPR003879">
    <property type="entry name" value="Butyrophylin_SPRY"/>
</dbReference>
<dbReference type="InterPro" id="IPR013320">
    <property type="entry name" value="ConA-like_dom_sf"/>
</dbReference>
<dbReference type="InterPro" id="IPR017903">
    <property type="entry name" value="COS_domain"/>
</dbReference>
<dbReference type="InterPro" id="IPR050617">
    <property type="entry name" value="E3_ligase_FN3/SPRY"/>
</dbReference>
<dbReference type="InterPro" id="IPR003961">
    <property type="entry name" value="FN3_dom"/>
</dbReference>
<dbReference type="InterPro" id="IPR036116">
    <property type="entry name" value="FN3_sf"/>
</dbReference>
<dbReference type="InterPro" id="IPR013783">
    <property type="entry name" value="Ig-like_fold"/>
</dbReference>
<dbReference type="InterPro" id="IPR035742">
    <property type="entry name" value="SPRY/PRY_FSD1"/>
</dbReference>
<dbReference type="InterPro" id="IPR003877">
    <property type="entry name" value="SPRY_dom"/>
</dbReference>
<dbReference type="PANTHER" id="PTHR24099">
    <property type="entry name" value="E3 UBIQUITIN-PROTEIN LIGASE TRIM36-RELATED"/>
    <property type="match status" value="1"/>
</dbReference>
<dbReference type="PANTHER" id="PTHR24099:SF8">
    <property type="entry name" value="FSD1-LIKE PROTEIN"/>
    <property type="match status" value="1"/>
</dbReference>
<dbReference type="Pfam" id="PF00041">
    <property type="entry name" value="fn3"/>
    <property type="match status" value="1"/>
</dbReference>
<dbReference type="Pfam" id="PF00622">
    <property type="entry name" value="SPRY"/>
    <property type="match status" value="1"/>
</dbReference>
<dbReference type="PRINTS" id="PR01407">
    <property type="entry name" value="BUTYPHLNCDUF"/>
</dbReference>
<dbReference type="SMART" id="SM00502">
    <property type="entry name" value="BBC"/>
    <property type="match status" value="1"/>
</dbReference>
<dbReference type="SMART" id="SM00449">
    <property type="entry name" value="SPRY"/>
    <property type="match status" value="1"/>
</dbReference>
<dbReference type="SUPFAM" id="SSF49899">
    <property type="entry name" value="Concanavalin A-like lectins/glucanases"/>
    <property type="match status" value="1"/>
</dbReference>
<dbReference type="SUPFAM" id="SSF49265">
    <property type="entry name" value="Fibronectin type III"/>
    <property type="match status" value="1"/>
</dbReference>
<dbReference type="PROSITE" id="PS50188">
    <property type="entry name" value="B302_SPRY"/>
    <property type="match status" value="1"/>
</dbReference>
<dbReference type="PROSITE" id="PS51262">
    <property type="entry name" value="COS"/>
    <property type="match status" value="1"/>
</dbReference>
<dbReference type="PROSITE" id="PS50853">
    <property type="entry name" value="FN3"/>
    <property type="match status" value="1"/>
</dbReference>
<keyword id="KW-0007">Acetylation</keyword>
<keyword id="KW-0025">Alternative splicing</keyword>
<keyword id="KW-0175">Coiled coil</keyword>
<keyword id="KW-0597">Phosphoprotein</keyword>
<keyword id="KW-1267">Proteomics identification</keyword>
<keyword id="KW-1185">Reference proteome</keyword>
<feature type="chain" id="PRO_0000089405" description="FSD1-like protein">
    <location>
        <begin position="1"/>
        <end position="530"/>
    </location>
</feature>
<feature type="domain" description="COS" evidence="4">
    <location>
        <begin position="137"/>
        <end position="194"/>
    </location>
</feature>
<feature type="domain" description="Fibronectin type-III" evidence="2">
    <location>
        <begin position="196"/>
        <end position="300"/>
    </location>
</feature>
<feature type="domain" description="B30.2/SPRY" evidence="3">
    <location>
        <begin position="300"/>
        <end position="506"/>
    </location>
</feature>
<feature type="region of interest" description="Disordered" evidence="5">
    <location>
        <begin position="322"/>
        <end position="366"/>
    </location>
</feature>
<feature type="coiled-coil region" evidence="1">
    <location>
        <begin position="102"/>
        <end position="141"/>
    </location>
</feature>
<feature type="compositionally biased region" description="Basic and acidic residues" evidence="5">
    <location>
        <begin position="330"/>
        <end position="341"/>
    </location>
</feature>
<feature type="compositionally biased region" description="Polar residues" evidence="5">
    <location>
        <begin position="342"/>
        <end position="354"/>
    </location>
</feature>
<feature type="modified residue" description="Phosphoserine" evidence="10">
    <location>
        <position position="520"/>
    </location>
</feature>
<feature type="modified residue" description="Phosphoserine" evidence="9">
    <location>
        <position position="523"/>
    </location>
</feature>
<feature type="splice variant" id="VSP_039645" description="In isoform 2 and isoform 3." evidence="6 7">
    <location>
        <begin position="6"/>
        <end position="37"/>
    </location>
</feature>
<feature type="splice variant" id="VSP_039646" description="In isoform 3." evidence="6">
    <original>AARQIKDRVTMASAFRLSLKPKVSDNMTHL</original>
    <variation>VHKNCINTLNKGSCIFKKAFLFFFSFGFLY</variation>
    <location>
        <begin position="148"/>
        <end position="177"/>
    </location>
</feature>
<feature type="splice variant" id="VSP_039647" description="In isoform 3." evidence="6">
    <location>
        <begin position="178"/>
        <end position="530"/>
    </location>
</feature>
<feature type="sequence conflict" description="In Ref. 2; BAH13012." evidence="8" ref="2">
    <original>A</original>
    <variation>S</variation>
    <location>
        <position position="39"/>
    </location>
</feature>
<feature type="sequence conflict" description="In Ref. 2; BAH13049." evidence="8" ref="2">
    <location>
        <position position="342"/>
    </location>
</feature>
<feature type="modified residue" description="N-acetylmethionine" evidence="11">
    <location sequence="Q9BXM9-2">
        <position position="1"/>
    </location>
</feature>
<feature type="modified residue" description="N-acetylmethionine" evidence="11">
    <location sequence="Q9BXM9-3">
        <position position="1"/>
    </location>
</feature>
<accession>Q9BXM9</accession>
<accession>A2A338</accession>
<accession>A6NKH7</accession>
<accession>B7Z5S6</accession>
<accession>B7Z5W3</accession>
<accession>Q5T879</accession>
<accession>Q5T880</accession>
<comment type="alternative products">
    <event type="alternative splicing"/>
    <isoform>
        <id>Q9BXM9-1</id>
        <name>1</name>
        <sequence type="displayed"/>
    </isoform>
    <isoform>
        <id>Q9BXM9-2</id>
        <name>2</name>
        <sequence type="described" ref="VSP_039645"/>
    </isoform>
    <isoform>
        <id>Q9BXM9-3</id>
        <name>3</name>
        <sequence type="described" ref="VSP_039645 VSP_039646 VSP_039647"/>
    </isoform>
</comment>
<comment type="miscellaneous">
    <molecule>Isoform 3</molecule>
    <text evidence="8">Due to intron retention.</text>
</comment>
<proteinExistence type="evidence at protein level"/>
<name>FSD1L_HUMAN</name>